<name>RSMG_MALP2</name>
<gene>
    <name evidence="1" type="primary">rsmG</name>
    <name type="ordered locus">MYPE7990</name>
</gene>
<organism>
    <name type="scientific">Malacoplasma penetrans (strain HF-2)</name>
    <name type="common">Mycoplasma penetrans</name>
    <dbReference type="NCBI Taxonomy" id="272633"/>
    <lineage>
        <taxon>Bacteria</taxon>
        <taxon>Bacillati</taxon>
        <taxon>Mycoplasmatota</taxon>
        <taxon>Mycoplasmoidales</taxon>
        <taxon>Mycoplasmoidaceae</taxon>
        <taxon>Malacoplasma</taxon>
    </lineage>
</organism>
<protein>
    <recommendedName>
        <fullName evidence="1">Ribosomal RNA small subunit methyltransferase G</fullName>
        <ecNumber evidence="1">2.1.1.-</ecNumber>
    </recommendedName>
    <alternativeName>
        <fullName evidence="1">16S rRNA 7-methylguanosine methyltransferase</fullName>
        <shortName evidence="1">16S rRNA m7G methyltransferase</shortName>
    </alternativeName>
</protein>
<proteinExistence type="inferred from homology"/>
<keyword id="KW-0963">Cytoplasm</keyword>
<keyword id="KW-0489">Methyltransferase</keyword>
<keyword id="KW-1185">Reference proteome</keyword>
<keyword id="KW-0698">rRNA processing</keyword>
<keyword id="KW-0949">S-adenosyl-L-methionine</keyword>
<keyword id="KW-0808">Transferase</keyword>
<accession>Q8EUW9</accession>
<sequence length="237" mass="27880">MNLKDLIKLLEVKFPQIDSNEVESKITIYKNYLQQENKIHNLTRLDKEEEIYQKYFYESILNFHNDLFDNKNINLLDIGSGSGVPGIFLKILFPHINLYIVESNTKKVNFLNNLVDKLELENVFISNQRCEDYIKDKIEFFDLITCRAVAELRILLELSFPGLKINGIGFFLKSNNYLVELDNAKNISSKLKIEEEPKIETIEYDGKTFVSLKYIKKNKVNNIFPRTWKEILNNDKN</sequence>
<reference key="1">
    <citation type="journal article" date="2002" name="Nucleic Acids Res.">
        <title>The complete genomic sequence of Mycoplasma penetrans, an intracellular bacterial pathogen in humans.</title>
        <authorList>
            <person name="Sasaki Y."/>
            <person name="Ishikawa J."/>
            <person name="Yamashita A."/>
            <person name="Oshima K."/>
            <person name="Kenri T."/>
            <person name="Furuya K."/>
            <person name="Yoshino C."/>
            <person name="Horino A."/>
            <person name="Shiba T."/>
            <person name="Sasaki T."/>
            <person name="Hattori M."/>
        </authorList>
    </citation>
    <scope>NUCLEOTIDE SEQUENCE [LARGE SCALE GENOMIC DNA]</scope>
    <source>
        <strain>HF-2</strain>
    </source>
</reference>
<dbReference type="EC" id="2.1.1.-" evidence="1"/>
<dbReference type="EMBL" id="BA000026">
    <property type="protein sequence ID" value="BAC44592.1"/>
    <property type="molecule type" value="Genomic_DNA"/>
</dbReference>
<dbReference type="RefSeq" id="WP_011077621.1">
    <property type="nucleotide sequence ID" value="NC_004432.1"/>
</dbReference>
<dbReference type="SMR" id="Q8EUW9"/>
<dbReference type="FunCoup" id="Q8EUW9">
    <property type="interactions" value="177"/>
</dbReference>
<dbReference type="STRING" id="272633.gene:10731921"/>
<dbReference type="KEGG" id="mpe:MYPE7990"/>
<dbReference type="eggNOG" id="COG0357">
    <property type="taxonomic scope" value="Bacteria"/>
</dbReference>
<dbReference type="HOGENOM" id="CLU_065341_0_1_14"/>
<dbReference type="InParanoid" id="Q8EUW9"/>
<dbReference type="Proteomes" id="UP000002522">
    <property type="component" value="Chromosome"/>
</dbReference>
<dbReference type="GO" id="GO:0005829">
    <property type="term" value="C:cytosol"/>
    <property type="evidence" value="ECO:0007669"/>
    <property type="project" value="TreeGrafter"/>
</dbReference>
<dbReference type="GO" id="GO:0070043">
    <property type="term" value="F:rRNA (guanine-N7-)-methyltransferase activity"/>
    <property type="evidence" value="ECO:0007669"/>
    <property type="project" value="UniProtKB-UniRule"/>
</dbReference>
<dbReference type="CDD" id="cd02440">
    <property type="entry name" value="AdoMet_MTases"/>
    <property type="match status" value="1"/>
</dbReference>
<dbReference type="Gene3D" id="3.40.50.150">
    <property type="entry name" value="Vaccinia Virus protein VP39"/>
    <property type="match status" value="1"/>
</dbReference>
<dbReference type="HAMAP" id="MF_00074">
    <property type="entry name" value="16SrRNA_methyltr_G"/>
    <property type="match status" value="1"/>
</dbReference>
<dbReference type="InterPro" id="IPR003682">
    <property type="entry name" value="rRNA_ssu_MeTfrase_G"/>
</dbReference>
<dbReference type="InterPro" id="IPR029063">
    <property type="entry name" value="SAM-dependent_MTases_sf"/>
</dbReference>
<dbReference type="NCBIfam" id="TIGR00138">
    <property type="entry name" value="rsmG_gidB"/>
    <property type="match status" value="1"/>
</dbReference>
<dbReference type="PANTHER" id="PTHR31760">
    <property type="entry name" value="S-ADENOSYL-L-METHIONINE-DEPENDENT METHYLTRANSFERASES SUPERFAMILY PROTEIN"/>
    <property type="match status" value="1"/>
</dbReference>
<dbReference type="PANTHER" id="PTHR31760:SF0">
    <property type="entry name" value="S-ADENOSYL-L-METHIONINE-DEPENDENT METHYLTRANSFERASES SUPERFAMILY PROTEIN"/>
    <property type="match status" value="1"/>
</dbReference>
<dbReference type="Pfam" id="PF02527">
    <property type="entry name" value="GidB"/>
    <property type="match status" value="1"/>
</dbReference>
<dbReference type="PIRSF" id="PIRSF003078">
    <property type="entry name" value="GidB"/>
    <property type="match status" value="1"/>
</dbReference>
<dbReference type="SUPFAM" id="SSF53335">
    <property type="entry name" value="S-adenosyl-L-methionine-dependent methyltransferases"/>
    <property type="match status" value="1"/>
</dbReference>
<feature type="chain" id="PRO_0000184288" description="Ribosomal RNA small subunit methyltransferase G">
    <location>
        <begin position="1"/>
        <end position="237"/>
    </location>
</feature>
<feature type="binding site" evidence="1">
    <location>
        <position position="79"/>
    </location>
    <ligand>
        <name>S-adenosyl-L-methionine</name>
        <dbReference type="ChEBI" id="CHEBI:59789"/>
    </ligand>
</feature>
<feature type="binding site" evidence="1">
    <location>
        <begin position="130"/>
        <end position="131"/>
    </location>
    <ligand>
        <name>S-adenosyl-L-methionine</name>
        <dbReference type="ChEBI" id="CHEBI:59789"/>
    </ligand>
</feature>
<feature type="binding site" evidence="1">
    <location>
        <position position="147"/>
    </location>
    <ligand>
        <name>S-adenosyl-L-methionine</name>
        <dbReference type="ChEBI" id="CHEBI:59789"/>
    </ligand>
</feature>
<evidence type="ECO:0000255" key="1">
    <source>
        <dbReference type="HAMAP-Rule" id="MF_00074"/>
    </source>
</evidence>
<comment type="function">
    <text evidence="1">Specifically methylates the N7 position of a guanine in 16S rRNA.</text>
</comment>
<comment type="subcellular location">
    <subcellularLocation>
        <location evidence="1">Cytoplasm</location>
    </subcellularLocation>
</comment>
<comment type="similarity">
    <text evidence="1">Belongs to the methyltransferase superfamily. RNA methyltransferase RsmG family.</text>
</comment>